<protein>
    <recommendedName>
        <fullName>Cytochrome b</fullName>
    </recommendedName>
    <alternativeName>
        <fullName>Complex III subunit 3</fullName>
    </alternativeName>
    <alternativeName>
        <fullName>Complex III subunit III</fullName>
    </alternativeName>
    <alternativeName>
        <fullName>Cytochrome b-c1 complex subunit 3</fullName>
    </alternativeName>
    <alternativeName>
        <fullName>Ubiquinol-cytochrome-c reductase complex cytochrome b subunit</fullName>
    </alternativeName>
</protein>
<reference key="1">
    <citation type="journal article" date="1989" name="Proc. Natl. Acad. Sci. U.S.A.">
        <title>Dynamics of mitochondrial DNA evolution in animals: amplification and sequencing with conserved primers.</title>
        <authorList>
            <person name="Kocher T.D."/>
            <person name="Thomas W.K."/>
            <person name="Meyer A."/>
            <person name="Edwards S.V."/>
            <person name="Paeaebo S."/>
            <person name="Villablanca F.X."/>
            <person name="Wilson A.C."/>
        </authorList>
    </citation>
    <scope>NUCLEOTIDE SEQUENCE [GENOMIC DNA]</scope>
</reference>
<sequence>TALLLAAHYTADTSLAFASVTHMCRNVQFGWLIRNLHANGASFFFICIYLHIGRGLYYGSYLNKETWNIGVILLLTLMA</sequence>
<evidence type="ECO:0000250" key="1"/>
<evidence type="ECO:0000250" key="2">
    <source>
        <dbReference type="UniProtKB" id="P00157"/>
    </source>
</evidence>
<evidence type="ECO:0000255" key="3">
    <source>
        <dbReference type="PROSITE-ProRule" id="PRU00968"/>
    </source>
</evidence>
<name>CYB_POMSU</name>
<keyword id="KW-0249">Electron transport</keyword>
<keyword id="KW-0349">Heme</keyword>
<keyword id="KW-0408">Iron</keyword>
<keyword id="KW-0472">Membrane</keyword>
<keyword id="KW-0479">Metal-binding</keyword>
<keyword id="KW-0496">Mitochondrion</keyword>
<keyword id="KW-0999">Mitochondrion inner membrane</keyword>
<keyword id="KW-0679">Respiratory chain</keyword>
<keyword id="KW-0812">Transmembrane</keyword>
<keyword id="KW-1133">Transmembrane helix</keyword>
<keyword id="KW-0813">Transport</keyword>
<keyword id="KW-0830">Ubiquinone</keyword>
<dbReference type="EMBL" id="M25687">
    <property type="protein sequence ID" value="AAA32138.1"/>
    <property type="molecule type" value="Genomic_DNA"/>
</dbReference>
<dbReference type="SMR" id="P16362"/>
<dbReference type="GO" id="GO:0005743">
    <property type="term" value="C:mitochondrial inner membrane"/>
    <property type="evidence" value="ECO:0007669"/>
    <property type="project" value="UniProtKB-SubCell"/>
</dbReference>
<dbReference type="GO" id="GO:0046872">
    <property type="term" value="F:metal ion binding"/>
    <property type="evidence" value="ECO:0007669"/>
    <property type="project" value="UniProtKB-KW"/>
</dbReference>
<dbReference type="GO" id="GO:0008121">
    <property type="term" value="F:ubiquinol-cytochrome-c reductase activity"/>
    <property type="evidence" value="ECO:0007669"/>
    <property type="project" value="TreeGrafter"/>
</dbReference>
<dbReference type="GO" id="GO:0006122">
    <property type="term" value="P:mitochondrial electron transport, ubiquinol to cytochrome c"/>
    <property type="evidence" value="ECO:0007669"/>
    <property type="project" value="TreeGrafter"/>
</dbReference>
<dbReference type="Gene3D" id="1.20.810.10">
    <property type="entry name" value="Cytochrome Bc1 Complex, Chain C"/>
    <property type="match status" value="1"/>
</dbReference>
<dbReference type="InterPro" id="IPR005797">
    <property type="entry name" value="Cyt_b/b6_N"/>
</dbReference>
<dbReference type="InterPro" id="IPR027387">
    <property type="entry name" value="Cytb/b6-like_sf"/>
</dbReference>
<dbReference type="InterPro" id="IPR016174">
    <property type="entry name" value="Di-haem_cyt_TM"/>
</dbReference>
<dbReference type="PANTHER" id="PTHR19271">
    <property type="entry name" value="CYTOCHROME B"/>
    <property type="match status" value="1"/>
</dbReference>
<dbReference type="PANTHER" id="PTHR19271:SF16">
    <property type="entry name" value="CYTOCHROME B"/>
    <property type="match status" value="1"/>
</dbReference>
<dbReference type="Pfam" id="PF00033">
    <property type="entry name" value="Cytochrome_B"/>
    <property type="match status" value="1"/>
</dbReference>
<dbReference type="SUPFAM" id="SSF81342">
    <property type="entry name" value="Transmembrane di-heme cytochromes"/>
    <property type="match status" value="1"/>
</dbReference>
<dbReference type="PROSITE" id="PS51002">
    <property type="entry name" value="CYTB_NTER"/>
    <property type="match status" value="1"/>
</dbReference>
<accession>P16362</accession>
<gene>
    <name type="primary">MT-CYB</name>
    <name type="synonym">COB</name>
    <name type="synonym">CYTB</name>
    <name type="synonym">MTCYB</name>
</gene>
<feature type="chain" id="PRO_0000061429" description="Cytochrome b">
    <location>
        <begin position="1" status="less than"/>
        <end position="79" status="greater than"/>
    </location>
</feature>
<feature type="transmembrane region" description="Helical" evidence="2">
    <location>
        <begin position="1" status="less than"/>
        <end position="7"/>
    </location>
</feature>
<feature type="transmembrane region" description="Helical" evidence="2">
    <location>
        <begin position="31"/>
        <end position="52"/>
    </location>
</feature>
<feature type="transmembrane region" description="Helical" evidence="2">
    <location>
        <begin position="67"/>
        <end position="79" status="greater than"/>
    </location>
</feature>
<feature type="binding site" description="axial binding residue" evidence="2">
    <location>
        <position position="37"/>
    </location>
    <ligand>
        <name>heme b</name>
        <dbReference type="ChEBI" id="CHEBI:60344"/>
        <label>b562</label>
    </ligand>
    <ligandPart>
        <name>Fe</name>
        <dbReference type="ChEBI" id="CHEBI:18248"/>
    </ligandPart>
</feature>
<feature type="binding site" description="axial binding residue" evidence="2">
    <location>
        <position position="51"/>
    </location>
    <ligand>
        <name>heme b</name>
        <dbReference type="ChEBI" id="CHEBI:60344"/>
        <label>b566</label>
    </ligand>
    <ligandPart>
        <name>Fe</name>
        <dbReference type="ChEBI" id="CHEBI:18248"/>
    </ligandPart>
</feature>
<feature type="non-terminal residue">
    <location>
        <position position="1"/>
    </location>
</feature>
<feature type="non-terminal residue">
    <location>
        <position position="79"/>
    </location>
</feature>
<comment type="function">
    <text evidence="2">Component of the ubiquinol-cytochrome c reductase complex (complex III or cytochrome b-c1 complex) that is part of the mitochondrial respiratory chain. The b-c1 complex mediates electron transfer from ubiquinol to cytochrome c. Contributes to the generation of a proton gradient across the mitochondrial membrane that is then used for ATP synthesis.</text>
</comment>
<comment type="cofactor">
    <cofactor evidence="2">
        <name>heme b</name>
        <dbReference type="ChEBI" id="CHEBI:60344"/>
    </cofactor>
    <text evidence="2">Binds 2 heme b groups non-covalently.</text>
</comment>
<comment type="subunit">
    <text evidence="2">The cytochrome bc1 complex contains 11 subunits: 3 respiratory subunits (MT-CYB, CYC1 and UQCRFS1), 2 core proteins (UQCRC1 and UQCRC2) and 6 low-molecular weight proteins (UQCRH/QCR6, UQCRB/QCR7, UQCRQ/QCR8, UQCR10/QCR9, UQCR11/QCR10 and a cleavage product of UQCRFS1). This cytochrome bc1 complex then forms a dimer.</text>
</comment>
<comment type="subcellular location">
    <subcellularLocation>
        <location evidence="2">Mitochondrion inner membrane</location>
        <topology evidence="2">Multi-pass membrane protein</topology>
    </subcellularLocation>
</comment>
<comment type="miscellaneous">
    <text evidence="1">Heme 1 (or BL or b562) is low-potential and absorbs at about 562 nm, and heme 2 (or BH or b566) is high-potential and absorbs at about 566 nm.</text>
</comment>
<comment type="similarity">
    <text evidence="3">Belongs to the cytochrome b family.</text>
</comment>
<comment type="caution">
    <text evidence="2">The full-length protein contains only eight transmembrane helices, not nine as predicted by bioinformatics tools.</text>
</comment>
<proteinExistence type="inferred from homology"/>
<geneLocation type="mitochondrion"/>
<organism>
    <name type="scientific">Pomatostomus superciliosus</name>
    <name type="common">White-browed babbler</name>
    <dbReference type="NCBI Taxonomy" id="9177"/>
    <lineage>
        <taxon>Eukaryota</taxon>
        <taxon>Metazoa</taxon>
        <taxon>Chordata</taxon>
        <taxon>Craniata</taxon>
        <taxon>Vertebrata</taxon>
        <taxon>Euteleostomi</taxon>
        <taxon>Archelosauria</taxon>
        <taxon>Archosauria</taxon>
        <taxon>Dinosauria</taxon>
        <taxon>Saurischia</taxon>
        <taxon>Theropoda</taxon>
        <taxon>Coelurosauria</taxon>
        <taxon>Aves</taxon>
        <taxon>Neognathae</taxon>
        <taxon>Neoaves</taxon>
        <taxon>Telluraves</taxon>
        <taxon>Australaves</taxon>
        <taxon>Passeriformes</taxon>
        <taxon>Sylvioidea</taxon>
        <taxon>Timaliidae</taxon>
        <taxon>Pomatostomus</taxon>
    </lineage>
</organism>